<evidence type="ECO:0000250" key="1"/>
<evidence type="ECO:0000250" key="2">
    <source>
        <dbReference type="UniProtKB" id="P28523"/>
    </source>
</evidence>
<evidence type="ECO:0000250" key="3">
    <source>
        <dbReference type="UniProtKB" id="Q7KZI7"/>
    </source>
</evidence>
<evidence type="ECO:0000250" key="4">
    <source>
        <dbReference type="UniProtKB" id="Q9TW45"/>
    </source>
</evidence>
<evidence type="ECO:0000255" key="5">
    <source>
        <dbReference type="PROSITE-ProRule" id="PRU00159"/>
    </source>
</evidence>
<evidence type="ECO:0000255" key="6">
    <source>
        <dbReference type="PROSITE-ProRule" id="PRU00212"/>
    </source>
</evidence>
<evidence type="ECO:0000255" key="7">
    <source>
        <dbReference type="PROSITE-ProRule" id="PRU00565"/>
    </source>
</evidence>
<evidence type="ECO:0000255" key="8">
    <source>
        <dbReference type="PROSITE-ProRule" id="PRU10027"/>
    </source>
</evidence>
<evidence type="ECO:0000256" key="9">
    <source>
        <dbReference type="SAM" id="MobiDB-lite"/>
    </source>
</evidence>
<evidence type="ECO:0000305" key="10"/>
<evidence type="ECO:0000312" key="11">
    <source>
        <dbReference type="EMBL" id="CAP25402.1"/>
    </source>
</evidence>
<sequence length="1088" mass="116525">MSTVSSYFMGISSKKNGSSATANKQSTRPQESHHHRRQQPTSQQSTEMNGTTTAPSGGTSSGTTTTSSGVPTASTGGGSARYSSSSSGRSHPTTGGGSSSHARSSGQSGMSSRSAARRNDQDVHVGKYKLLKTIGKGNFAKVKLAKHVITGHEVAIKIIDKTALNPSSLQKLFREVKIMKQLDHPNIVKLYQVMETEQTLYLVLEYASGGEVFDYLVAHGRMKEKEARAKFRQIVSAVQYLHSKNIIHRDLKAENLLLDQDMNIKIADFGFSNTFSLGNKLDTFCGSPPYAAPELFSGKKYDGPEVDVWSLGVILYTLVSGSLPFDGQNLKELRERVLRGKYRIPFYMSTDCENLLKKFLVINPQRRSSLDNIMKDRWMNVGYEDDELKPFIEPPKDQIDEQRIEKLIQIFQLGFNKATILESVEKEKFEDIHATYLLLGERKSDPSRYSRSSATATGPSITSGAALASAANAQKHQSSAAPASGSSSSRRSSQNDAAASGAGGTVVMSGTRHGGVQMRAQPTSRQAAISLLQPPSYKPSSNTTQIAQIPPLFNRNSTATSSTNQPSSGITAGTRKIDPKGRIPLNSAAVQSHRTATGAVAANTGGIPSQRDHSQQQQQYMNQLTSSSMMSKLINKTPAAGGANATTSATSAAAAPLQKSGSQISHAPTEPVIREDDDESNSEHQNGNVPLIGGVGPQTSPVVAPSEDVTSSEQQKQEKASSEAPKETKPSMIHQSPSMPPSQMMTAMESLKLSESGGKSPSNSQQPPQRATSQQMSRSATTNSAANMASNQQSSGAPQQSGASSQQCHTKPSSTSSSSSSSTTAPTSSGQPHHQHQLTHNASFSVTPSAYQMPTTTTITSGAPTSSSAFPRNTRNRQTFHGKTEKDKGGDDGSDEIGDTPANVSIGATGASANNTEGTIWSKLSKLTRRDHNRESMTQPVSSRAGTIGAAQGQQTAAALAAIREQSSGPLTPGTPPVAQAMTQEGDVKPRSLRFTWSMKTTSSLAPDDMMREIRKVLDANGCDYEQRERYMILCVHGDPNTDSLVQWEMEVCKLPRLSLNGVRFKRISGTSIGFKNIASKIAQELNL</sequence>
<organism>
    <name type="scientific">Caenorhabditis briggsae</name>
    <dbReference type="NCBI Taxonomy" id="6238"/>
    <lineage>
        <taxon>Eukaryota</taxon>
        <taxon>Metazoa</taxon>
        <taxon>Ecdysozoa</taxon>
        <taxon>Nematoda</taxon>
        <taxon>Chromadorea</taxon>
        <taxon>Rhabditida</taxon>
        <taxon>Rhabditina</taxon>
        <taxon>Rhabditomorpha</taxon>
        <taxon>Rhabditoidea</taxon>
        <taxon>Rhabditidae</taxon>
        <taxon>Peloderinae</taxon>
        <taxon>Caenorhabditis</taxon>
    </lineage>
</organism>
<comment type="function">
    <text evidence="4">Required for cytoplasmic partitioning and asymmetric cell division in early embryogenesis. Phosphorylates and restricts the asymmetry effector mex-5 (and possibly also mex-6) to the anterior cytoplasm of the zygote. Regulates mes-1 expression during early embryogenesis. Critical role in postembryonic vulval morphogenesis.</text>
</comment>
<comment type="catalytic activity">
    <reaction evidence="3">
        <text>L-seryl-[protein] + ATP = O-phospho-L-seryl-[protein] + ADP + H(+)</text>
        <dbReference type="Rhea" id="RHEA:17989"/>
        <dbReference type="Rhea" id="RHEA-COMP:9863"/>
        <dbReference type="Rhea" id="RHEA-COMP:11604"/>
        <dbReference type="ChEBI" id="CHEBI:15378"/>
        <dbReference type="ChEBI" id="CHEBI:29999"/>
        <dbReference type="ChEBI" id="CHEBI:30616"/>
        <dbReference type="ChEBI" id="CHEBI:83421"/>
        <dbReference type="ChEBI" id="CHEBI:456216"/>
        <dbReference type="EC" id="2.7.11.1"/>
    </reaction>
</comment>
<comment type="catalytic activity">
    <reaction evidence="3">
        <text>L-threonyl-[protein] + ATP = O-phospho-L-threonyl-[protein] + ADP + H(+)</text>
        <dbReference type="Rhea" id="RHEA:46608"/>
        <dbReference type="Rhea" id="RHEA-COMP:11060"/>
        <dbReference type="Rhea" id="RHEA-COMP:11605"/>
        <dbReference type="ChEBI" id="CHEBI:15378"/>
        <dbReference type="ChEBI" id="CHEBI:30013"/>
        <dbReference type="ChEBI" id="CHEBI:30616"/>
        <dbReference type="ChEBI" id="CHEBI:61977"/>
        <dbReference type="ChEBI" id="CHEBI:456216"/>
        <dbReference type="EC" id="2.7.11.1"/>
    </reaction>
</comment>
<comment type="cofactor">
    <cofactor evidence="3">
        <name>Mg(2+)</name>
        <dbReference type="ChEBI" id="CHEBI:18420"/>
    </cofactor>
</comment>
<comment type="subcellular location">
    <subcellularLocation>
        <location evidence="1">Cytoplasm</location>
        <location evidence="1">Cell cortex</location>
    </subcellularLocation>
    <text evidence="4">Colocalizes with germ granules (P granules).</text>
</comment>
<comment type="similarity">
    <text evidence="10">Belongs to the protein kinase superfamily. CAMK Ser/Thr protein kinase family. SNF1 subfamily.</text>
</comment>
<proteinExistence type="inferred from homology"/>
<name>PAR1_CAEBR</name>
<gene>
    <name type="primary">par-1</name>
    <name type="ORF">CBG04756</name>
</gene>
<dbReference type="EC" id="2.7.11.1"/>
<dbReference type="EMBL" id="HE601135">
    <property type="protein sequence ID" value="CAP25402.1"/>
    <property type="molecule type" value="Genomic_DNA"/>
</dbReference>
<dbReference type="SMR" id="A8WYE4"/>
<dbReference type="FunCoup" id="A8WYE4">
    <property type="interactions" value="1938"/>
</dbReference>
<dbReference type="STRING" id="6238.A8WYE4"/>
<dbReference type="KEGG" id="cbr:CBG_04756"/>
<dbReference type="CTD" id="8579940"/>
<dbReference type="WormBase" id="CBG04756a">
    <property type="protein sequence ID" value="CBP47106"/>
    <property type="gene ID" value="WBGene00027371"/>
    <property type="gene designation" value="Cbr-par-1"/>
</dbReference>
<dbReference type="eggNOG" id="KOG0586">
    <property type="taxonomic scope" value="Eukaryota"/>
</dbReference>
<dbReference type="HOGENOM" id="CLU_000288_157_2_1"/>
<dbReference type="InParanoid" id="A8WYE4"/>
<dbReference type="OMA" id="AVEMIAC"/>
<dbReference type="Proteomes" id="UP000008549">
    <property type="component" value="Unassembled WGS sequence"/>
</dbReference>
<dbReference type="GO" id="GO:0005938">
    <property type="term" value="C:cell cortex"/>
    <property type="evidence" value="ECO:0007669"/>
    <property type="project" value="UniProtKB-SubCell"/>
</dbReference>
<dbReference type="GO" id="GO:0005737">
    <property type="term" value="C:cytoplasm"/>
    <property type="evidence" value="ECO:0000318"/>
    <property type="project" value="GO_Central"/>
</dbReference>
<dbReference type="GO" id="GO:0005524">
    <property type="term" value="F:ATP binding"/>
    <property type="evidence" value="ECO:0007669"/>
    <property type="project" value="UniProtKB-KW"/>
</dbReference>
<dbReference type="GO" id="GO:0046872">
    <property type="term" value="F:metal ion binding"/>
    <property type="evidence" value="ECO:0007669"/>
    <property type="project" value="UniProtKB-KW"/>
</dbReference>
<dbReference type="GO" id="GO:0106310">
    <property type="term" value="F:protein serine kinase activity"/>
    <property type="evidence" value="ECO:0007669"/>
    <property type="project" value="RHEA"/>
</dbReference>
<dbReference type="GO" id="GO:0050321">
    <property type="term" value="F:tau-protein kinase activity"/>
    <property type="evidence" value="ECO:0000318"/>
    <property type="project" value="GO_Central"/>
</dbReference>
<dbReference type="GO" id="GO:0035556">
    <property type="term" value="P:intracellular signal transduction"/>
    <property type="evidence" value="ECO:0000318"/>
    <property type="project" value="GO_Central"/>
</dbReference>
<dbReference type="GO" id="GO:0000226">
    <property type="term" value="P:microtubule cytoskeleton organization"/>
    <property type="evidence" value="ECO:0000318"/>
    <property type="project" value="GO_Central"/>
</dbReference>
<dbReference type="CDD" id="cd12196">
    <property type="entry name" value="MARK1-3_C"/>
    <property type="match status" value="1"/>
</dbReference>
<dbReference type="CDD" id="cd14072">
    <property type="entry name" value="STKc_MARK"/>
    <property type="match status" value="1"/>
</dbReference>
<dbReference type="FunFam" id="1.10.510.10:FF:001032">
    <property type="entry name" value="KP78b, isoform A"/>
    <property type="match status" value="1"/>
</dbReference>
<dbReference type="FunFam" id="3.30.200.20:FF:000003">
    <property type="entry name" value="Non-specific serine/threonine protein kinase"/>
    <property type="match status" value="1"/>
</dbReference>
<dbReference type="FunFam" id="3.30.310.80:FF:000001">
    <property type="entry name" value="Non-specific serine/threonine protein kinase"/>
    <property type="match status" value="1"/>
</dbReference>
<dbReference type="Gene3D" id="1.10.8.10">
    <property type="entry name" value="DNA helicase RuvA subunit, C-terminal domain"/>
    <property type="match status" value="1"/>
</dbReference>
<dbReference type="Gene3D" id="3.30.310.80">
    <property type="entry name" value="Kinase associated domain 1, KA1"/>
    <property type="match status" value="1"/>
</dbReference>
<dbReference type="Gene3D" id="3.30.200.20">
    <property type="entry name" value="Phosphorylase Kinase, domain 1"/>
    <property type="match status" value="1"/>
</dbReference>
<dbReference type="Gene3D" id="1.10.510.10">
    <property type="entry name" value="Transferase(Phosphotransferase) domain 1"/>
    <property type="match status" value="1"/>
</dbReference>
<dbReference type="InterPro" id="IPR028375">
    <property type="entry name" value="KA1/Ssp2_C"/>
</dbReference>
<dbReference type="InterPro" id="IPR001772">
    <property type="entry name" value="KA1_dom"/>
</dbReference>
<dbReference type="InterPro" id="IPR011009">
    <property type="entry name" value="Kinase-like_dom_sf"/>
</dbReference>
<dbReference type="InterPro" id="IPR049508">
    <property type="entry name" value="MARK1-4_cat"/>
</dbReference>
<dbReference type="InterPro" id="IPR000719">
    <property type="entry name" value="Prot_kinase_dom"/>
</dbReference>
<dbReference type="InterPro" id="IPR017441">
    <property type="entry name" value="Protein_kinase_ATP_BS"/>
</dbReference>
<dbReference type="InterPro" id="IPR008271">
    <property type="entry name" value="Ser/Thr_kinase_AS"/>
</dbReference>
<dbReference type="InterPro" id="IPR015940">
    <property type="entry name" value="UBA"/>
</dbReference>
<dbReference type="PANTHER" id="PTHR24346:SF82">
    <property type="entry name" value="KP78A-RELATED"/>
    <property type="match status" value="1"/>
</dbReference>
<dbReference type="PANTHER" id="PTHR24346">
    <property type="entry name" value="MAP/MICROTUBULE AFFINITY-REGULATING KINASE"/>
    <property type="match status" value="1"/>
</dbReference>
<dbReference type="Pfam" id="PF02149">
    <property type="entry name" value="KA1"/>
    <property type="match status" value="1"/>
</dbReference>
<dbReference type="Pfam" id="PF00069">
    <property type="entry name" value="Pkinase"/>
    <property type="match status" value="1"/>
</dbReference>
<dbReference type="SMART" id="SM00220">
    <property type="entry name" value="S_TKc"/>
    <property type="match status" value="1"/>
</dbReference>
<dbReference type="SUPFAM" id="SSF103243">
    <property type="entry name" value="KA1-like"/>
    <property type="match status" value="1"/>
</dbReference>
<dbReference type="SUPFAM" id="SSF56112">
    <property type="entry name" value="Protein kinase-like (PK-like)"/>
    <property type="match status" value="1"/>
</dbReference>
<dbReference type="PROSITE" id="PS50032">
    <property type="entry name" value="KA1"/>
    <property type="match status" value="1"/>
</dbReference>
<dbReference type="PROSITE" id="PS00107">
    <property type="entry name" value="PROTEIN_KINASE_ATP"/>
    <property type="match status" value="1"/>
</dbReference>
<dbReference type="PROSITE" id="PS50011">
    <property type="entry name" value="PROTEIN_KINASE_DOM"/>
    <property type="match status" value="1"/>
</dbReference>
<dbReference type="PROSITE" id="PS00108">
    <property type="entry name" value="PROTEIN_KINASE_ST"/>
    <property type="match status" value="1"/>
</dbReference>
<dbReference type="PROSITE" id="PS50030">
    <property type="entry name" value="UBA"/>
    <property type="match status" value="1"/>
</dbReference>
<reference evidence="11" key="1">
    <citation type="journal article" date="2003" name="PLoS Biol.">
        <title>The genome sequence of Caenorhabditis briggsae: a platform for comparative genomics.</title>
        <authorList>
            <person name="Stein L.D."/>
            <person name="Bao Z."/>
            <person name="Blasiar D."/>
            <person name="Blumenthal T."/>
            <person name="Brent M.R."/>
            <person name="Chen N."/>
            <person name="Chinwalla A."/>
            <person name="Clarke L."/>
            <person name="Clee C."/>
            <person name="Coghlan A."/>
            <person name="Coulson A."/>
            <person name="D'Eustachio P."/>
            <person name="Fitch D.H.A."/>
            <person name="Fulton L.A."/>
            <person name="Fulton R.E."/>
            <person name="Griffiths-Jones S."/>
            <person name="Harris T.W."/>
            <person name="Hillier L.W."/>
            <person name="Kamath R."/>
            <person name="Kuwabara P.E."/>
            <person name="Mardis E.R."/>
            <person name="Marra M.A."/>
            <person name="Miner T.L."/>
            <person name="Minx P."/>
            <person name="Mullikin J.C."/>
            <person name="Plumb R.W."/>
            <person name="Rogers J."/>
            <person name="Schein J.E."/>
            <person name="Sohrmann M."/>
            <person name="Spieth J."/>
            <person name="Stajich J.E."/>
            <person name="Wei C."/>
            <person name="Willey D."/>
            <person name="Wilson R.K."/>
            <person name="Durbin R.M."/>
            <person name="Waterston R.H."/>
        </authorList>
    </citation>
    <scope>NUCLEOTIDE SEQUENCE [LARGE SCALE GENOMIC DNA]</scope>
    <source>
        <strain evidence="11">AF16</strain>
    </source>
</reference>
<keyword id="KW-0067">ATP-binding</keyword>
<keyword id="KW-0963">Cytoplasm</keyword>
<keyword id="KW-0217">Developmental protein</keyword>
<keyword id="KW-0418">Kinase</keyword>
<keyword id="KW-0460">Magnesium</keyword>
<keyword id="KW-0479">Metal-binding</keyword>
<keyword id="KW-0547">Nucleotide-binding</keyword>
<keyword id="KW-1185">Reference proteome</keyword>
<keyword id="KW-0723">Serine/threonine-protein kinase</keyword>
<keyword id="KW-0808">Transferase</keyword>
<feature type="chain" id="PRO_0000383321" description="Serine/threonine-protein kinase par-1">
    <location>
        <begin position="1"/>
        <end position="1088"/>
    </location>
</feature>
<feature type="domain" description="Protein kinase" evidence="5">
    <location>
        <begin position="128"/>
        <end position="379"/>
    </location>
</feature>
<feature type="domain" description="UBA" evidence="6">
    <location>
        <begin position="398"/>
        <end position="440"/>
    </location>
</feature>
<feature type="domain" description="KA1" evidence="7">
    <location>
        <begin position="1039"/>
        <end position="1088"/>
    </location>
</feature>
<feature type="region of interest" description="Disordered" evidence="9">
    <location>
        <begin position="1"/>
        <end position="121"/>
    </location>
</feature>
<feature type="region of interest" description="Disordered" evidence="9">
    <location>
        <begin position="466"/>
        <end position="524"/>
    </location>
</feature>
<feature type="region of interest" description="Disordered" evidence="9">
    <location>
        <begin position="556"/>
        <end position="581"/>
    </location>
</feature>
<feature type="region of interest" description="Disordered" evidence="9">
    <location>
        <begin position="602"/>
        <end position="622"/>
    </location>
</feature>
<feature type="region of interest" description="Disordered" evidence="9">
    <location>
        <begin position="638"/>
        <end position="953"/>
    </location>
</feature>
<feature type="region of interest" description="Disordered" evidence="9">
    <location>
        <begin position="967"/>
        <end position="987"/>
    </location>
</feature>
<feature type="compositionally biased region" description="Polar residues" evidence="9">
    <location>
        <begin position="13"/>
        <end position="29"/>
    </location>
</feature>
<feature type="compositionally biased region" description="Polar residues" evidence="9">
    <location>
        <begin position="39"/>
        <end position="49"/>
    </location>
</feature>
<feature type="compositionally biased region" description="Low complexity" evidence="9">
    <location>
        <begin position="50"/>
        <end position="114"/>
    </location>
</feature>
<feature type="compositionally biased region" description="Low complexity" evidence="9">
    <location>
        <begin position="466"/>
        <end position="500"/>
    </location>
</feature>
<feature type="compositionally biased region" description="Polar residues" evidence="9">
    <location>
        <begin position="556"/>
        <end position="571"/>
    </location>
</feature>
<feature type="compositionally biased region" description="Low complexity" evidence="9">
    <location>
        <begin position="638"/>
        <end position="656"/>
    </location>
</feature>
<feature type="compositionally biased region" description="Basic and acidic residues" evidence="9">
    <location>
        <begin position="715"/>
        <end position="729"/>
    </location>
</feature>
<feature type="compositionally biased region" description="Polar residues" evidence="9">
    <location>
        <begin position="733"/>
        <end position="745"/>
    </location>
</feature>
<feature type="compositionally biased region" description="Polar residues" evidence="9">
    <location>
        <begin position="757"/>
        <end position="775"/>
    </location>
</feature>
<feature type="compositionally biased region" description="Low complexity" evidence="9">
    <location>
        <begin position="776"/>
        <end position="829"/>
    </location>
</feature>
<feature type="compositionally biased region" description="Polar residues" evidence="9">
    <location>
        <begin position="838"/>
        <end position="853"/>
    </location>
</feature>
<feature type="compositionally biased region" description="Low complexity" evidence="9">
    <location>
        <begin position="854"/>
        <end position="869"/>
    </location>
</feature>
<feature type="compositionally biased region" description="Basic and acidic residues" evidence="9">
    <location>
        <begin position="882"/>
        <end position="891"/>
    </location>
</feature>
<feature type="active site" description="Proton acceptor" evidence="2 5 8">
    <location>
        <position position="250"/>
    </location>
</feature>
<feature type="binding site" evidence="2 5">
    <location>
        <begin position="134"/>
        <end position="142"/>
    </location>
    <ligand>
        <name>ATP</name>
        <dbReference type="ChEBI" id="CHEBI:30616"/>
    </ligand>
</feature>
<feature type="binding site" evidence="2 5">
    <location>
        <position position="157"/>
    </location>
    <ligand>
        <name>ATP</name>
        <dbReference type="ChEBI" id="CHEBI:30616"/>
    </ligand>
</feature>
<accession>A8WYE4</accession>
<protein>
    <recommendedName>
        <fullName evidence="4 11">Serine/threonine-protein kinase par-1</fullName>
        <ecNumber>2.7.11.1</ecNumber>
    </recommendedName>
</protein>